<name>P5CR_STAAS</name>
<evidence type="ECO:0000255" key="1">
    <source>
        <dbReference type="HAMAP-Rule" id="MF_01925"/>
    </source>
</evidence>
<reference key="1">
    <citation type="journal article" date="2004" name="Proc. Natl. Acad. Sci. U.S.A.">
        <title>Complete genomes of two clinical Staphylococcus aureus strains: evidence for the rapid evolution of virulence and drug resistance.</title>
        <authorList>
            <person name="Holden M.T.G."/>
            <person name="Feil E.J."/>
            <person name="Lindsay J.A."/>
            <person name="Peacock S.J."/>
            <person name="Day N.P.J."/>
            <person name="Enright M.C."/>
            <person name="Foster T.J."/>
            <person name="Moore C.E."/>
            <person name="Hurst L."/>
            <person name="Atkin R."/>
            <person name="Barron A."/>
            <person name="Bason N."/>
            <person name="Bentley S.D."/>
            <person name="Chillingworth C."/>
            <person name="Chillingworth T."/>
            <person name="Churcher C."/>
            <person name="Clark L."/>
            <person name="Corton C."/>
            <person name="Cronin A."/>
            <person name="Doggett J."/>
            <person name="Dowd L."/>
            <person name="Feltwell T."/>
            <person name="Hance Z."/>
            <person name="Harris B."/>
            <person name="Hauser H."/>
            <person name="Holroyd S."/>
            <person name="Jagels K."/>
            <person name="James K.D."/>
            <person name="Lennard N."/>
            <person name="Line A."/>
            <person name="Mayes R."/>
            <person name="Moule S."/>
            <person name="Mungall K."/>
            <person name="Ormond D."/>
            <person name="Quail M.A."/>
            <person name="Rabbinowitsch E."/>
            <person name="Rutherford K.M."/>
            <person name="Sanders M."/>
            <person name="Sharp S."/>
            <person name="Simmonds M."/>
            <person name="Stevens K."/>
            <person name="Whitehead S."/>
            <person name="Barrell B.G."/>
            <person name="Spratt B.G."/>
            <person name="Parkhill J."/>
        </authorList>
    </citation>
    <scope>NUCLEOTIDE SEQUENCE [LARGE SCALE GENOMIC DNA]</scope>
    <source>
        <strain>MSSA476</strain>
    </source>
</reference>
<sequence>MKLVFYGAGNMAQAIFTGIINSSNLDANDIYLTNKSNEQALKAFAEKLGVNYSYDDATLLKDADYVFLGTKPHDFDALATRIKPHITKDNCFISIMAGIPIDYIKQQLECQNPVARIMPNTNAQVGHSVTGISFSNNFDPKSKDEINDLVKAFGSVIEVSEDHLHQVTAITGSGPAFLYHVFEQYVKAGTKLGLEKEQVEESIRNLIIGTSKMIERSDLSMAQLRKNITSKGGTTQAGLDTLSQYDLVSIFEDCLNAAVDRSIELSNVEDQ</sequence>
<gene>
    <name evidence="1" type="primary">proC</name>
    <name type="ordered locus">SAS1443</name>
</gene>
<accession>Q6G961</accession>
<protein>
    <recommendedName>
        <fullName evidence="1">Pyrroline-5-carboxylate reductase</fullName>
        <shortName evidence="1">P5C reductase</shortName>
        <shortName evidence="1">P5CR</shortName>
        <ecNumber evidence="1">1.5.1.2</ecNumber>
    </recommendedName>
    <alternativeName>
        <fullName evidence="1">PCA reductase</fullName>
    </alternativeName>
</protein>
<feature type="chain" id="PRO_0000187302" description="Pyrroline-5-carboxylate reductase">
    <location>
        <begin position="1"/>
        <end position="271"/>
    </location>
</feature>
<dbReference type="EC" id="1.5.1.2" evidence="1"/>
<dbReference type="EMBL" id="BX571857">
    <property type="protein sequence ID" value="CAG43220.1"/>
    <property type="molecule type" value="Genomic_DNA"/>
</dbReference>
<dbReference type="RefSeq" id="WP_000779749.1">
    <property type="nucleotide sequence ID" value="NC_002953.3"/>
</dbReference>
<dbReference type="SMR" id="Q6G961"/>
<dbReference type="KEGG" id="sas:SAS1443"/>
<dbReference type="HOGENOM" id="CLU_042344_0_1_9"/>
<dbReference type="UniPathway" id="UPA00098">
    <property type="reaction ID" value="UER00361"/>
</dbReference>
<dbReference type="GO" id="GO:0005737">
    <property type="term" value="C:cytoplasm"/>
    <property type="evidence" value="ECO:0007669"/>
    <property type="project" value="UniProtKB-SubCell"/>
</dbReference>
<dbReference type="GO" id="GO:0004735">
    <property type="term" value="F:pyrroline-5-carboxylate reductase activity"/>
    <property type="evidence" value="ECO:0007669"/>
    <property type="project" value="UniProtKB-UniRule"/>
</dbReference>
<dbReference type="GO" id="GO:0055129">
    <property type="term" value="P:L-proline biosynthetic process"/>
    <property type="evidence" value="ECO:0007669"/>
    <property type="project" value="UniProtKB-UniRule"/>
</dbReference>
<dbReference type="FunFam" id="1.10.3730.10:FF:000001">
    <property type="entry name" value="Pyrroline-5-carboxylate reductase"/>
    <property type="match status" value="1"/>
</dbReference>
<dbReference type="Gene3D" id="3.40.50.720">
    <property type="entry name" value="NAD(P)-binding Rossmann-like Domain"/>
    <property type="match status" value="1"/>
</dbReference>
<dbReference type="Gene3D" id="1.10.3730.10">
    <property type="entry name" value="ProC C-terminal domain-like"/>
    <property type="match status" value="1"/>
</dbReference>
<dbReference type="HAMAP" id="MF_01925">
    <property type="entry name" value="P5C_reductase"/>
    <property type="match status" value="1"/>
</dbReference>
<dbReference type="InterPro" id="IPR008927">
    <property type="entry name" value="6-PGluconate_DH-like_C_sf"/>
</dbReference>
<dbReference type="InterPro" id="IPR036291">
    <property type="entry name" value="NAD(P)-bd_dom_sf"/>
</dbReference>
<dbReference type="InterPro" id="IPR028939">
    <property type="entry name" value="P5C_Rdtase_cat_N"/>
</dbReference>
<dbReference type="InterPro" id="IPR029036">
    <property type="entry name" value="P5CR_dimer"/>
</dbReference>
<dbReference type="InterPro" id="IPR000304">
    <property type="entry name" value="Pyrroline-COOH_reductase"/>
</dbReference>
<dbReference type="NCBIfam" id="TIGR00112">
    <property type="entry name" value="proC"/>
    <property type="match status" value="1"/>
</dbReference>
<dbReference type="PANTHER" id="PTHR11645">
    <property type="entry name" value="PYRROLINE-5-CARBOXYLATE REDUCTASE"/>
    <property type="match status" value="1"/>
</dbReference>
<dbReference type="PANTHER" id="PTHR11645:SF0">
    <property type="entry name" value="PYRROLINE-5-CARBOXYLATE REDUCTASE 3"/>
    <property type="match status" value="1"/>
</dbReference>
<dbReference type="Pfam" id="PF03807">
    <property type="entry name" value="F420_oxidored"/>
    <property type="match status" value="1"/>
</dbReference>
<dbReference type="Pfam" id="PF14748">
    <property type="entry name" value="P5CR_dimer"/>
    <property type="match status" value="1"/>
</dbReference>
<dbReference type="PIRSF" id="PIRSF000193">
    <property type="entry name" value="Pyrrol-5-carb_rd"/>
    <property type="match status" value="1"/>
</dbReference>
<dbReference type="SUPFAM" id="SSF48179">
    <property type="entry name" value="6-phosphogluconate dehydrogenase C-terminal domain-like"/>
    <property type="match status" value="1"/>
</dbReference>
<dbReference type="SUPFAM" id="SSF51735">
    <property type="entry name" value="NAD(P)-binding Rossmann-fold domains"/>
    <property type="match status" value="1"/>
</dbReference>
<proteinExistence type="inferred from homology"/>
<comment type="function">
    <text evidence="1">Catalyzes the reduction of 1-pyrroline-5-carboxylate (PCA) to L-proline.</text>
</comment>
<comment type="catalytic activity">
    <reaction evidence="1">
        <text>L-proline + NADP(+) = (S)-1-pyrroline-5-carboxylate + NADPH + 2 H(+)</text>
        <dbReference type="Rhea" id="RHEA:14109"/>
        <dbReference type="ChEBI" id="CHEBI:15378"/>
        <dbReference type="ChEBI" id="CHEBI:17388"/>
        <dbReference type="ChEBI" id="CHEBI:57783"/>
        <dbReference type="ChEBI" id="CHEBI:58349"/>
        <dbReference type="ChEBI" id="CHEBI:60039"/>
        <dbReference type="EC" id="1.5.1.2"/>
    </reaction>
</comment>
<comment type="catalytic activity">
    <reaction evidence="1">
        <text>L-proline + NAD(+) = (S)-1-pyrroline-5-carboxylate + NADH + 2 H(+)</text>
        <dbReference type="Rhea" id="RHEA:14105"/>
        <dbReference type="ChEBI" id="CHEBI:15378"/>
        <dbReference type="ChEBI" id="CHEBI:17388"/>
        <dbReference type="ChEBI" id="CHEBI:57540"/>
        <dbReference type="ChEBI" id="CHEBI:57945"/>
        <dbReference type="ChEBI" id="CHEBI:60039"/>
        <dbReference type="EC" id="1.5.1.2"/>
    </reaction>
</comment>
<comment type="pathway">
    <text evidence="1">Amino-acid biosynthesis; L-proline biosynthesis; L-proline from L-glutamate 5-semialdehyde: step 1/1.</text>
</comment>
<comment type="subcellular location">
    <subcellularLocation>
        <location evidence="1">Cytoplasm</location>
    </subcellularLocation>
</comment>
<comment type="similarity">
    <text evidence="1">Belongs to the pyrroline-5-carboxylate reductase family.</text>
</comment>
<keyword id="KW-0028">Amino-acid biosynthesis</keyword>
<keyword id="KW-0963">Cytoplasm</keyword>
<keyword id="KW-0521">NADP</keyword>
<keyword id="KW-0560">Oxidoreductase</keyword>
<keyword id="KW-0641">Proline biosynthesis</keyword>
<organism>
    <name type="scientific">Staphylococcus aureus (strain MSSA476)</name>
    <dbReference type="NCBI Taxonomy" id="282459"/>
    <lineage>
        <taxon>Bacteria</taxon>
        <taxon>Bacillati</taxon>
        <taxon>Bacillota</taxon>
        <taxon>Bacilli</taxon>
        <taxon>Bacillales</taxon>
        <taxon>Staphylococcaceae</taxon>
        <taxon>Staphylococcus</taxon>
    </lineage>
</organism>